<name>6PGL_SALPK</name>
<proteinExistence type="inferred from homology"/>
<sequence length="331" mass="36351">MKQTVYTASPESQQIHVWSLNHEGTLTLVQVVDVPGQVQPMVVSPDKRYLYVGVRPEFRVLAYRIAPDDGALTFAAESALPGSPTHISTDHHGRFVFVGSYNAGNVSVTRLQDGLPVELVDVVEGLDGCHSANITPDNRTLWVPALKQERICLFTLSDDGHLVAQEPAEVNTVEGAGPRHMVFHPNRQYAYCVNELNSSVDVWQLKNPHGEIECVQTLDMMPADFSDTRWAADIHITPDGRHLYACDRTASLITVFSVSEDGSVLSVEGFQPTEAQPRGFNIDNSGKYLIAAGQKSHHIAVYEITGTQGLLTEKGRYAVGQGPMWVVVNAY</sequence>
<accession>B5BC39</accession>
<keyword id="KW-0119">Carbohydrate metabolism</keyword>
<keyword id="KW-0313">Glucose metabolism</keyword>
<keyword id="KW-0378">Hydrolase</keyword>
<comment type="function">
    <text evidence="1">Catalyzes the hydrolysis of 6-phosphogluconolactone to 6-phosphogluconate.</text>
</comment>
<comment type="catalytic activity">
    <reaction evidence="1">
        <text>6-phospho-D-glucono-1,5-lactone + H2O = 6-phospho-D-gluconate + H(+)</text>
        <dbReference type="Rhea" id="RHEA:12556"/>
        <dbReference type="ChEBI" id="CHEBI:15377"/>
        <dbReference type="ChEBI" id="CHEBI:15378"/>
        <dbReference type="ChEBI" id="CHEBI:57955"/>
        <dbReference type="ChEBI" id="CHEBI:58759"/>
        <dbReference type="EC" id="3.1.1.31"/>
    </reaction>
</comment>
<comment type="pathway">
    <text evidence="1">Carbohydrate degradation; pentose phosphate pathway; D-ribulose 5-phosphate from D-glucose 6-phosphate (oxidative stage): step 2/3.</text>
</comment>
<comment type="similarity">
    <text evidence="1">Belongs to the cycloisomerase 2 family.</text>
</comment>
<organism>
    <name type="scientific">Salmonella paratyphi A (strain AKU_12601)</name>
    <dbReference type="NCBI Taxonomy" id="554290"/>
    <lineage>
        <taxon>Bacteria</taxon>
        <taxon>Pseudomonadati</taxon>
        <taxon>Pseudomonadota</taxon>
        <taxon>Gammaproteobacteria</taxon>
        <taxon>Enterobacterales</taxon>
        <taxon>Enterobacteriaceae</taxon>
        <taxon>Salmonella</taxon>
    </lineage>
</organism>
<gene>
    <name evidence="1" type="primary">pgl</name>
    <name type="ordered locus">SSPA1834</name>
</gene>
<reference key="1">
    <citation type="journal article" date="2009" name="BMC Genomics">
        <title>Pseudogene accumulation in the evolutionary histories of Salmonella enterica serovars Paratyphi A and Typhi.</title>
        <authorList>
            <person name="Holt K.E."/>
            <person name="Thomson N.R."/>
            <person name="Wain J."/>
            <person name="Langridge G.C."/>
            <person name="Hasan R."/>
            <person name="Bhutta Z.A."/>
            <person name="Quail M.A."/>
            <person name="Norbertczak H."/>
            <person name="Walker D."/>
            <person name="Simmonds M."/>
            <person name="White B."/>
            <person name="Bason N."/>
            <person name="Mungall K."/>
            <person name="Dougan G."/>
            <person name="Parkhill J."/>
        </authorList>
    </citation>
    <scope>NUCLEOTIDE SEQUENCE [LARGE SCALE GENOMIC DNA]</scope>
    <source>
        <strain>AKU_12601</strain>
    </source>
</reference>
<dbReference type="EC" id="3.1.1.31" evidence="1"/>
<dbReference type="EMBL" id="FM200053">
    <property type="protein sequence ID" value="CAR60031.1"/>
    <property type="molecule type" value="Genomic_DNA"/>
</dbReference>
<dbReference type="RefSeq" id="WP_000815473.1">
    <property type="nucleotide sequence ID" value="NC_011147.1"/>
</dbReference>
<dbReference type="SMR" id="B5BC39"/>
<dbReference type="KEGG" id="sek:SSPA1834"/>
<dbReference type="HOGENOM" id="CLU_038716_2_0_6"/>
<dbReference type="UniPathway" id="UPA00115">
    <property type="reaction ID" value="UER00409"/>
</dbReference>
<dbReference type="Proteomes" id="UP000001869">
    <property type="component" value="Chromosome"/>
</dbReference>
<dbReference type="GO" id="GO:0005829">
    <property type="term" value="C:cytosol"/>
    <property type="evidence" value="ECO:0007669"/>
    <property type="project" value="TreeGrafter"/>
</dbReference>
<dbReference type="GO" id="GO:0017057">
    <property type="term" value="F:6-phosphogluconolactonase activity"/>
    <property type="evidence" value="ECO:0007669"/>
    <property type="project" value="UniProtKB-UniRule"/>
</dbReference>
<dbReference type="GO" id="GO:0006006">
    <property type="term" value="P:glucose metabolic process"/>
    <property type="evidence" value="ECO:0007669"/>
    <property type="project" value="UniProtKB-KW"/>
</dbReference>
<dbReference type="GO" id="GO:0009051">
    <property type="term" value="P:pentose-phosphate shunt, oxidative branch"/>
    <property type="evidence" value="ECO:0007669"/>
    <property type="project" value="UniProtKB-UniRule"/>
</dbReference>
<dbReference type="FunFam" id="2.130.10.10:FF:000051">
    <property type="entry name" value="6-phosphogluconolactonase"/>
    <property type="match status" value="1"/>
</dbReference>
<dbReference type="Gene3D" id="2.130.10.10">
    <property type="entry name" value="YVTN repeat-like/Quinoprotein amine dehydrogenase"/>
    <property type="match status" value="1"/>
</dbReference>
<dbReference type="HAMAP" id="MF_01605">
    <property type="entry name" value="6P_gluconolactonase"/>
    <property type="match status" value="1"/>
</dbReference>
<dbReference type="InterPro" id="IPR022528">
    <property type="entry name" value="6-phosphogluconolactonase_YbhE"/>
</dbReference>
<dbReference type="InterPro" id="IPR050282">
    <property type="entry name" value="Cycloisomerase_2"/>
</dbReference>
<dbReference type="InterPro" id="IPR019405">
    <property type="entry name" value="Lactonase_7-beta_prop"/>
</dbReference>
<dbReference type="InterPro" id="IPR011045">
    <property type="entry name" value="N2O_reductase_N"/>
</dbReference>
<dbReference type="InterPro" id="IPR015943">
    <property type="entry name" value="WD40/YVTN_repeat-like_dom_sf"/>
</dbReference>
<dbReference type="NCBIfam" id="NF008258">
    <property type="entry name" value="PRK11028.1"/>
    <property type="match status" value="1"/>
</dbReference>
<dbReference type="PANTHER" id="PTHR30344:SF1">
    <property type="entry name" value="6-PHOSPHOGLUCONOLACTONASE"/>
    <property type="match status" value="1"/>
</dbReference>
<dbReference type="PANTHER" id="PTHR30344">
    <property type="entry name" value="6-PHOSPHOGLUCONOLACTONASE-RELATED"/>
    <property type="match status" value="1"/>
</dbReference>
<dbReference type="Pfam" id="PF10282">
    <property type="entry name" value="Lactonase"/>
    <property type="match status" value="1"/>
</dbReference>
<dbReference type="SUPFAM" id="SSF50974">
    <property type="entry name" value="Nitrous oxide reductase, N-terminal domain"/>
    <property type="match status" value="2"/>
</dbReference>
<protein>
    <recommendedName>
        <fullName evidence="1">6-phosphogluconolactonase</fullName>
        <shortName evidence="1">6-P-gluconolactonase</shortName>
        <ecNumber evidence="1">3.1.1.31</ecNumber>
    </recommendedName>
</protein>
<evidence type="ECO:0000255" key="1">
    <source>
        <dbReference type="HAMAP-Rule" id="MF_01605"/>
    </source>
</evidence>
<feature type="chain" id="PRO_1000148167" description="6-phosphogluconolactonase">
    <location>
        <begin position="1"/>
        <end position="331"/>
    </location>
</feature>